<accession>B7K3M6</accession>
<proteinExistence type="inferred from homology"/>
<keyword id="KW-0067">ATP-binding</keyword>
<keyword id="KW-0090">Biological rhythms</keyword>
<keyword id="KW-0418">Kinase</keyword>
<keyword id="KW-0547">Nucleotide-binding</keyword>
<keyword id="KW-0597">Phosphoprotein</keyword>
<keyword id="KW-1185">Reference proteome</keyword>
<keyword id="KW-0808">Transferase</keyword>
<keyword id="KW-0902">Two-component regulatory system</keyword>
<organism>
    <name type="scientific">Rippkaea orientalis (strain PCC 8801 / RF-1)</name>
    <name type="common">Cyanothece sp. (strain PCC 8801)</name>
    <dbReference type="NCBI Taxonomy" id="41431"/>
    <lineage>
        <taxon>Bacteria</taxon>
        <taxon>Bacillati</taxon>
        <taxon>Cyanobacteriota</taxon>
        <taxon>Cyanophyceae</taxon>
        <taxon>Oscillatoriophycideae</taxon>
        <taxon>Chroococcales</taxon>
        <taxon>Aphanothecaceae</taxon>
        <taxon>Rippkaea</taxon>
        <taxon>Rippkaea orientalis</taxon>
    </lineage>
</organism>
<feature type="chain" id="PRO_1000188351" description="Adaptive-response sensory kinase SasA">
    <location>
        <begin position="1"/>
        <end position="391"/>
    </location>
</feature>
<feature type="domain" description="Histidine kinase" evidence="1">
    <location>
        <begin position="169"/>
        <end position="391"/>
    </location>
</feature>
<feature type="modified residue" description="Phosphohistidine; by autocatalysis" evidence="1">
    <location>
        <position position="172"/>
    </location>
</feature>
<protein>
    <recommendedName>
        <fullName evidence="1">Adaptive-response sensory kinase SasA</fullName>
        <ecNumber evidence="1">2.7.13.3</ecNumber>
    </recommendedName>
    <alternativeName>
        <fullName evidence="1">Sensor histidine kinase SasA</fullName>
    </alternativeName>
</protein>
<dbReference type="EC" id="2.7.13.3" evidence="1"/>
<dbReference type="EMBL" id="CP001287">
    <property type="protein sequence ID" value="ACK65368.1"/>
    <property type="molecule type" value="Genomic_DNA"/>
</dbReference>
<dbReference type="RefSeq" id="WP_012594642.1">
    <property type="nucleotide sequence ID" value="NC_011726.1"/>
</dbReference>
<dbReference type="SMR" id="B7K3M6"/>
<dbReference type="STRING" id="41431.PCC8801_1303"/>
<dbReference type="KEGG" id="cyp:PCC8801_1303"/>
<dbReference type="eggNOG" id="COG2205">
    <property type="taxonomic scope" value="Bacteria"/>
</dbReference>
<dbReference type="HOGENOM" id="CLU_723030_0_0_3"/>
<dbReference type="OrthoDB" id="9773956at2"/>
<dbReference type="Proteomes" id="UP000008204">
    <property type="component" value="Chromosome"/>
</dbReference>
<dbReference type="GO" id="GO:0005524">
    <property type="term" value="F:ATP binding"/>
    <property type="evidence" value="ECO:0007669"/>
    <property type="project" value="UniProtKB-KW"/>
</dbReference>
<dbReference type="GO" id="GO:0000155">
    <property type="term" value="F:phosphorelay sensor kinase activity"/>
    <property type="evidence" value="ECO:0007669"/>
    <property type="project" value="InterPro"/>
</dbReference>
<dbReference type="GO" id="GO:0007623">
    <property type="term" value="P:circadian rhythm"/>
    <property type="evidence" value="ECO:0007669"/>
    <property type="project" value="UniProtKB-UniRule"/>
</dbReference>
<dbReference type="CDD" id="cd00075">
    <property type="entry name" value="HATPase"/>
    <property type="match status" value="1"/>
</dbReference>
<dbReference type="CDD" id="cd00082">
    <property type="entry name" value="HisKA"/>
    <property type="match status" value="1"/>
</dbReference>
<dbReference type="CDD" id="cd02978">
    <property type="entry name" value="KaiB_like"/>
    <property type="match status" value="1"/>
</dbReference>
<dbReference type="FunFam" id="1.10.287.130:FF:000154">
    <property type="entry name" value="Adaptive-response sensory kinase"/>
    <property type="match status" value="1"/>
</dbReference>
<dbReference type="FunFam" id="3.30.565.10:FF:000006">
    <property type="entry name" value="Sensor histidine kinase WalK"/>
    <property type="match status" value="1"/>
</dbReference>
<dbReference type="Gene3D" id="1.10.287.130">
    <property type="match status" value="1"/>
</dbReference>
<dbReference type="Gene3D" id="3.40.30.10">
    <property type="entry name" value="Glutaredoxin"/>
    <property type="match status" value="1"/>
</dbReference>
<dbReference type="Gene3D" id="3.30.565.10">
    <property type="entry name" value="Histidine kinase-like ATPase, C-terminal domain"/>
    <property type="match status" value="1"/>
</dbReference>
<dbReference type="HAMAP" id="MF_01837">
    <property type="entry name" value="Kinase_SasA"/>
    <property type="match status" value="1"/>
</dbReference>
<dbReference type="InterPro" id="IPR036890">
    <property type="entry name" value="HATPase_C_sf"/>
</dbReference>
<dbReference type="InterPro" id="IPR005467">
    <property type="entry name" value="His_kinase_dom"/>
</dbReference>
<dbReference type="InterPro" id="IPR003661">
    <property type="entry name" value="HisK_dim/P_dom"/>
</dbReference>
<dbReference type="InterPro" id="IPR036097">
    <property type="entry name" value="HisK_dim/P_sf"/>
</dbReference>
<dbReference type="InterPro" id="IPR011649">
    <property type="entry name" value="KaiB_domain"/>
</dbReference>
<dbReference type="InterPro" id="IPR023527">
    <property type="entry name" value="Kinase_SasA"/>
</dbReference>
<dbReference type="InterPro" id="IPR050736">
    <property type="entry name" value="Sensor_HK_Regulatory"/>
</dbReference>
<dbReference type="InterPro" id="IPR004358">
    <property type="entry name" value="Sig_transdc_His_kin-like_C"/>
</dbReference>
<dbReference type="InterPro" id="IPR036249">
    <property type="entry name" value="Thioredoxin-like_sf"/>
</dbReference>
<dbReference type="NCBIfam" id="NF006800">
    <property type="entry name" value="PRK09303.1"/>
    <property type="match status" value="1"/>
</dbReference>
<dbReference type="PANTHER" id="PTHR43711:SF26">
    <property type="entry name" value="SENSOR HISTIDINE KINASE RCSC"/>
    <property type="match status" value="1"/>
</dbReference>
<dbReference type="PANTHER" id="PTHR43711">
    <property type="entry name" value="TWO-COMPONENT HISTIDINE KINASE"/>
    <property type="match status" value="1"/>
</dbReference>
<dbReference type="Pfam" id="PF02518">
    <property type="entry name" value="HATPase_c"/>
    <property type="match status" value="1"/>
</dbReference>
<dbReference type="Pfam" id="PF00512">
    <property type="entry name" value="HisKA"/>
    <property type="match status" value="1"/>
</dbReference>
<dbReference type="Pfam" id="PF07689">
    <property type="entry name" value="KaiB"/>
    <property type="match status" value="1"/>
</dbReference>
<dbReference type="PRINTS" id="PR00344">
    <property type="entry name" value="BCTRLSENSOR"/>
</dbReference>
<dbReference type="SMART" id="SM00387">
    <property type="entry name" value="HATPase_c"/>
    <property type="match status" value="1"/>
</dbReference>
<dbReference type="SMART" id="SM00388">
    <property type="entry name" value="HisKA"/>
    <property type="match status" value="1"/>
</dbReference>
<dbReference type="SMART" id="SM01248">
    <property type="entry name" value="KaiB"/>
    <property type="match status" value="1"/>
</dbReference>
<dbReference type="SUPFAM" id="SSF55874">
    <property type="entry name" value="ATPase domain of HSP90 chaperone/DNA topoisomerase II/histidine kinase"/>
    <property type="match status" value="1"/>
</dbReference>
<dbReference type="SUPFAM" id="SSF47384">
    <property type="entry name" value="Homodimeric domain of signal transducing histidine kinase"/>
    <property type="match status" value="1"/>
</dbReference>
<dbReference type="SUPFAM" id="SSF52833">
    <property type="entry name" value="Thioredoxin-like"/>
    <property type="match status" value="1"/>
</dbReference>
<dbReference type="PROSITE" id="PS50109">
    <property type="entry name" value="HIS_KIN"/>
    <property type="match status" value="1"/>
</dbReference>
<reference key="1">
    <citation type="journal article" date="2011" name="MBio">
        <title>Novel metabolic attributes of the genus Cyanothece, comprising a group of unicellular nitrogen-fixing Cyanobacteria.</title>
        <authorList>
            <person name="Bandyopadhyay A."/>
            <person name="Elvitigala T."/>
            <person name="Welsh E."/>
            <person name="Stockel J."/>
            <person name="Liberton M."/>
            <person name="Min H."/>
            <person name="Sherman L.A."/>
            <person name="Pakrasi H.B."/>
        </authorList>
    </citation>
    <scope>NUCLEOTIDE SEQUENCE [LARGE SCALE GENOMIC DNA]</scope>
    <source>
        <strain>PCC 8801 / RF-1</strain>
    </source>
</reference>
<name>SASA_RIPO1</name>
<comment type="function">
    <text evidence="1">Member of the two-component regulatory system SasA/RpaA involved in genome-wide circadian gene expression. One of several clock output pathways. Participates in the Kai clock protein complex, the main circadian regulator in cyanobacteria, via its interaction with KaiC. KaiC enhances the autophosphorylation activity of SasA, which then transfers its phosphate group to RpaA to activate it. In addition to its output function, recruits fold-shifted KaiB (KaiB(fs)) to KaiC to cooperatively form the KaiB(6):KaiC(6) complex (independent of SasA kinase activity). Required for robustness of the circadian rhythm of gene expression and is involved in clock output, also required for adaptation to light/dark cycles.</text>
</comment>
<comment type="catalytic activity">
    <reaction evidence="1">
        <text>ATP + protein L-histidine = ADP + protein N-phospho-L-histidine.</text>
        <dbReference type="EC" id="2.7.13.3"/>
    </reaction>
</comment>
<comment type="subunit">
    <text evidence="1">Homooligomerizes. Interacts with KaiC. Participates in the KaiABC clock complex, whose core is composed of a KaiC homohexamer, 6 KaiB and up to 6 KaiA dimers. SasA and KaiB(fs) compete to bind to KaiC.</text>
</comment>
<comment type="domain">
    <text evidence="1">The N-terminus interacts with KaiC, while the C-terminal histidine kinase domain autophosphorylates and is probably responsible for self-oligomerization. The N-terminal domain stimulates the C-terminus to autophosphorylate.</text>
</comment>
<sequence>MLEPSNLKTTSGSEHRGAMSIQLLLFVDERPSSHEHIEQIQHYLNSLKPDYPYELQIIEIHEQPHLVEHFRLVAAPALVKVFPEPRQTLAGSNIVNQLKKWWPRWQLDLEESQTENTNNRQTEQTKAESLNSVGYSAELMKLSDEIFRLKKEKDELLQQLKFKDQVLAMLAHDLRSPLTAASIAVETLELTQKQEDTERRAQLREQLYHQARKQFRVMNRLITDILQASKTMTAQLSVYYHDLFLPVLCQDILDEYREIFKEKSLTLVKDIPQDIPTVYADEELIRQVIVNLLDNAIKYTPSGGKVTVSILHRTTQKVQVSICDTGPGIPEEKQERIFEGHFRLKRDQEKEGYGLGLSLCRKIIRTHYGQIWVDSVPDQGSCFHFTLPVCR</sequence>
<gene>
    <name evidence="1" type="primary">sasA</name>
    <name type="ordered locus">PCC8801_1303</name>
</gene>
<evidence type="ECO:0000255" key="1">
    <source>
        <dbReference type="HAMAP-Rule" id="MF_01837"/>
    </source>
</evidence>